<keyword id="KW-0131">Cell cycle</keyword>
<keyword id="KW-0132">Cell division</keyword>
<keyword id="KW-0342">GTP-binding</keyword>
<keyword id="KW-0460">Magnesium</keyword>
<keyword id="KW-0479">Metal-binding</keyword>
<keyword id="KW-0547">Nucleotide-binding</keyword>
<keyword id="KW-0717">Septation</keyword>
<accession>Q8NW73</accession>
<gene>
    <name evidence="1" type="primary">engB</name>
    <name type="ordered locus">MW1617</name>
</gene>
<feature type="chain" id="PRO_0000157785" description="Probable GTP-binding protein EngB">
    <location>
        <begin position="1"/>
        <end position="196"/>
    </location>
</feature>
<feature type="domain" description="EngB-type G" evidence="1">
    <location>
        <begin position="24"/>
        <end position="196"/>
    </location>
</feature>
<feature type="binding site" evidence="1">
    <location>
        <begin position="32"/>
        <end position="39"/>
    </location>
    <ligand>
        <name>GTP</name>
        <dbReference type="ChEBI" id="CHEBI:37565"/>
    </ligand>
</feature>
<feature type="binding site" evidence="1">
    <location>
        <position position="39"/>
    </location>
    <ligand>
        <name>Mg(2+)</name>
        <dbReference type="ChEBI" id="CHEBI:18420"/>
    </ligand>
</feature>
<feature type="binding site" evidence="1">
    <location>
        <begin position="59"/>
        <end position="63"/>
    </location>
    <ligand>
        <name>GTP</name>
        <dbReference type="ChEBI" id="CHEBI:37565"/>
    </ligand>
</feature>
<feature type="binding site" evidence="1">
    <location>
        <position position="61"/>
    </location>
    <ligand>
        <name>Mg(2+)</name>
        <dbReference type="ChEBI" id="CHEBI:18420"/>
    </ligand>
</feature>
<feature type="binding site" evidence="1">
    <location>
        <begin position="77"/>
        <end position="80"/>
    </location>
    <ligand>
        <name>GTP</name>
        <dbReference type="ChEBI" id="CHEBI:37565"/>
    </ligand>
</feature>
<feature type="binding site" evidence="1">
    <location>
        <begin position="144"/>
        <end position="147"/>
    </location>
    <ligand>
        <name>GTP</name>
        <dbReference type="ChEBI" id="CHEBI:37565"/>
    </ligand>
</feature>
<feature type="binding site" evidence="1">
    <location>
        <begin position="176"/>
        <end position="178"/>
    </location>
    <ligand>
        <name>GTP</name>
        <dbReference type="ChEBI" id="CHEBI:37565"/>
    </ligand>
</feature>
<protein>
    <recommendedName>
        <fullName evidence="1">Probable GTP-binding protein EngB</fullName>
    </recommendedName>
</protein>
<sequence length="196" mass="22684">MKVNPNNIELIISAVKEEQYPKTELSEVALSGRSNVGKSTFINSMIGRKNMARTSQQPGKTQTLNFYNIDEQLIFVDVPGYGYAKVSKTQREKFGKMIEEYITKRENLQLVIQLVDLRHDPTQDDILMYNYLKHFDIPTLVICTKEDKIPKGKVQKHIKNIKTQLDMDPDDTIVSYSSIQNNKQQQIWNLIEPYIS</sequence>
<comment type="function">
    <text evidence="1">Necessary for normal cell division and for the maintenance of normal septation.</text>
</comment>
<comment type="cofactor">
    <cofactor evidence="1">
        <name>Mg(2+)</name>
        <dbReference type="ChEBI" id="CHEBI:18420"/>
    </cofactor>
</comment>
<comment type="similarity">
    <text evidence="1">Belongs to the TRAFAC class TrmE-Era-EngA-EngB-Septin-like GTPase superfamily. EngB GTPase family.</text>
</comment>
<proteinExistence type="inferred from homology"/>
<reference key="1">
    <citation type="journal article" date="2002" name="Lancet">
        <title>Genome and virulence determinants of high virulence community-acquired MRSA.</title>
        <authorList>
            <person name="Baba T."/>
            <person name="Takeuchi F."/>
            <person name="Kuroda M."/>
            <person name="Yuzawa H."/>
            <person name="Aoki K."/>
            <person name="Oguchi A."/>
            <person name="Nagai Y."/>
            <person name="Iwama N."/>
            <person name="Asano K."/>
            <person name="Naimi T."/>
            <person name="Kuroda H."/>
            <person name="Cui L."/>
            <person name="Yamamoto K."/>
            <person name="Hiramatsu K."/>
        </authorList>
    </citation>
    <scope>NUCLEOTIDE SEQUENCE [LARGE SCALE GENOMIC DNA]</scope>
    <source>
        <strain>MW2</strain>
    </source>
</reference>
<name>ENGB_STAAW</name>
<evidence type="ECO:0000255" key="1">
    <source>
        <dbReference type="HAMAP-Rule" id="MF_00321"/>
    </source>
</evidence>
<organism>
    <name type="scientific">Staphylococcus aureus (strain MW2)</name>
    <dbReference type="NCBI Taxonomy" id="196620"/>
    <lineage>
        <taxon>Bacteria</taxon>
        <taxon>Bacillati</taxon>
        <taxon>Bacillota</taxon>
        <taxon>Bacilli</taxon>
        <taxon>Bacillales</taxon>
        <taxon>Staphylococcaceae</taxon>
        <taxon>Staphylococcus</taxon>
    </lineage>
</organism>
<dbReference type="EMBL" id="BA000033">
    <property type="protein sequence ID" value="BAB95482.1"/>
    <property type="molecule type" value="Genomic_DNA"/>
</dbReference>
<dbReference type="RefSeq" id="WP_000867701.1">
    <property type="nucleotide sequence ID" value="NC_003923.1"/>
</dbReference>
<dbReference type="SMR" id="Q8NW73"/>
<dbReference type="KEGG" id="sam:MW1617"/>
<dbReference type="HOGENOM" id="CLU_033732_3_0_9"/>
<dbReference type="GO" id="GO:0005829">
    <property type="term" value="C:cytosol"/>
    <property type="evidence" value="ECO:0007669"/>
    <property type="project" value="TreeGrafter"/>
</dbReference>
<dbReference type="GO" id="GO:0005525">
    <property type="term" value="F:GTP binding"/>
    <property type="evidence" value="ECO:0007669"/>
    <property type="project" value="UniProtKB-UniRule"/>
</dbReference>
<dbReference type="GO" id="GO:0046872">
    <property type="term" value="F:metal ion binding"/>
    <property type="evidence" value="ECO:0007669"/>
    <property type="project" value="UniProtKB-KW"/>
</dbReference>
<dbReference type="GO" id="GO:0000917">
    <property type="term" value="P:division septum assembly"/>
    <property type="evidence" value="ECO:0007669"/>
    <property type="project" value="UniProtKB-KW"/>
</dbReference>
<dbReference type="CDD" id="cd01876">
    <property type="entry name" value="YihA_EngB"/>
    <property type="match status" value="1"/>
</dbReference>
<dbReference type="FunFam" id="3.40.50.300:FF:000098">
    <property type="entry name" value="Probable GTP-binding protein EngB"/>
    <property type="match status" value="1"/>
</dbReference>
<dbReference type="Gene3D" id="3.40.50.300">
    <property type="entry name" value="P-loop containing nucleotide triphosphate hydrolases"/>
    <property type="match status" value="1"/>
</dbReference>
<dbReference type="HAMAP" id="MF_00321">
    <property type="entry name" value="GTPase_EngB"/>
    <property type="match status" value="1"/>
</dbReference>
<dbReference type="InterPro" id="IPR030393">
    <property type="entry name" value="G_ENGB_dom"/>
</dbReference>
<dbReference type="InterPro" id="IPR006073">
    <property type="entry name" value="GTP-bd"/>
</dbReference>
<dbReference type="InterPro" id="IPR019987">
    <property type="entry name" value="GTP-bd_ribosome_bio_YsxC"/>
</dbReference>
<dbReference type="InterPro" id="IPR027417">
    <property type="entry name" value="P-loop_NTPase"/>
</dbReference>
<dbReference type="NCBIfam" id="TIGR03598">
    <property type="entry name" value="GTPase_YsxC"/>
    <property type="match status" value="1"/>
</dbReference>
<dbReference type="PANTHER" id="PTHR11649:SF13">
    <property type="entry name" value="ENGB-TYPE G DOMAIN-CONTAINING PROTEIN"/>
    <property type="match status" value="1"/>
</dbReference>
<dbReference type="PANTHER" id="PTHR11649">
    <property type="entry name" value="MSS1/TRME-RELATED GTP-BINDING PROTEIN"/>
    <property type="match status" value="1"/>
</dbReference>
<dbReference type="Pfam" id="PF01926">
    <property type="entry name" value="MMR_HSR1"/>
    <property type="match status" value="1"/>
</dbReference>
<dbReference type="SUPFAM" id="SSF52540">
    <property type="entry name" value="P-loop containing nucleoside triphosphate hydrolases"/>
    <property type="match status" value="1"/>
</dbReference>
<dbReference type="PROSITE" id="PS51706">
    <property type="entry name" value="G_ENGB"/>
    <property type="match status" value="1"/>
</dbReference>